<feature type="chain" id="PRO_1000211988" description="Peptidase T">
    <location>
        <begin position="1"/>
        <end position="412"/>
    </location>
</feature>
<feature type="active site" evidence="1">
    <location>
        <position position="83"/>
    </location>
</feature>
<feature type="active site" description="Proton acceptor" evidence="1">
    <location>
        <position position="178"/>
    </location>
</feature>
<feature type="binding site" evidence="1">
    <location>
        <position position="81"/>
    </location>
    <ligand>
        <name>Zn(2+)</name>
        <dbReference type="ChEBI" id="CHEBI:29105"/>
        <label>1</label>
    </ligand>
</feature>
<feature type="binding site" evidence="1">
    <location>
        <position position="144"/>
    </location>
    <ligand>
        <name>Zn(2+)</name>
        <dbReference type="ChEBI" id="CHEBI:29105"/>
        <label>1</label>
    </ligand>
</feature>
<feature type="binding site" evidence="1">
    <location>
        <position position="144"/>
    </location>
    <ligand>
        <name>Zn(2+)</name>
        <dbReference type="ChEBI" id="CHEBI:29105"/>
        <label>2</label>
    </ligand>
</feature>
<feature type="binding site" evidence="1">
    <location>
        <position position="179"/>
    </location>
    <ligand>
        <name>Zn(2+)</name>
        <dbReference type="ChEBI" id="CHEBI:29105"/>
        <label>2</label>
    </ligand>
</feature>
<feature type="binding site" evidence="1">
    <location>
        <position position="201"/>
    </location>
    <ligand>
        <name>Zn(2+)</name>
        <dbReference type="ChEBI" id="CHEBI:29105"/>
        <label>1</label>
    </ligand>
</feature>
<feature type="binding site" evidence="1">
    <location>
        <position position="383"/>
    </location>
    <ligand>
        <name>Zn(2+)</name>
        <dbReference type="ChEBI" id="CHEBI:29105"/>
        <label>2</label>
    </ligand>
</feature>
<proteinExistence type="inferred from homology"/>
<evidence type="ECO:0000255" key="1">
    <source>
        <dbReference type="HAMAP-Rule" id="MF_00550"/>
    </source>
</evidence>
<dbReference type="EC" id="3.4.11.4" evidence="1"/>
<dbReference type="EMBL" id="CP000227">
    <property type="protein sequence ID" value="ACM13965.1"/>
    <property type="molecule type" value="Genomic_DNA"/>
</dbReference>
<dbReference type="SMR" id="B9IV41"/>
<dbReference type="MEROPS" id="M20.003"/>
<dbReference type="KEGG" id="bcq:BCQ_3537"/>
<dbReference type="HOGENOM" id="CLU_053676_0_0_9"/>
<dbReference type="Proteomes" id="UP000000441">
    <property type="component" value="Chromosome"/>
</dbReference>
<dbReference type="GO" id="GO:0005829">
    <property type="term" value="C:cytosol"/>
    <property type="evidence" value="ECO:0007669"/>
    <property type="project" value="TreeGrafter"/>
</dbReference>
<dbReference type="GO" id="GO:0008237">
    <property type="term" value="F:metallopeptidase activity"/>
    <property type="evidence" value="ECO:0007669"/>
    <property type="project" value="UniProtKB-KW"/>
</dbReference>
<dbReference type="GO" id="GO:0045148">
    <property type="term" value="F:tripeptide aminopeptidase activity"/>
    <property type="evidence" value="ECO:0007669"/>
    <property type="project" value="UniProtKB-UniRule"/>
</dbReference>
<dbReference type="GO" id="GO:0008270">
    <property type="term" value="F:zinc ion binding"/>
    <property type="evidence" value="ECO:0007669"/>
    <property type="project" value="UniProtKB-UniRule"/>
</dbReference>
<dbReference type="GO" id="GO:0043171">
    <property type="term" value="P:peptide catabolic process"/>
    <property type="evidence" value="ECO:0007669"/>
    <property type="project" value="UniProtKB-UniRule"/>
</dbReference>
<dbReference type="GO" id="GO:0006508">
    <property type="term" value="P:proteolysis"/>
    <property type="evidence" value="ECO:0007669"/>
    <property type="project" value="UniProtKB-UniRule"/>
</dbReference>
<dbReference type="CDD" id="cd03892">
    <property type="entry name" value="M20_peptT"/>
    <property type="match status" value="1"/>
</dbReference>
<dbReference type="FunFam" id="3.30.70.360:FF:000002">
    <property type="entry name" value="Peptidase T"/>
    <property type="match status" value="1"/>
</dbReference>
<dbReference type="Gene3D" id="3.30.70.360">
    <property type="match status" value="1"/>
</dbReference>
<dbReference type="Gene3D" id="3.40.630.10">
    <property type="entry name" value="Zn peptidases"/>
    <property type="match status" value="1"/>
</dbReference>
<dbReference type="HAMAP" id="MF_00550">
    <property type="entry name" value="Aminopeptidase_M20"/>
    <property type="match status" value="1"/>
</dbReference>
<dbReference type="InterPro" id="IPR001261">
    <property type="entry name" value="ArgE/DapE_CS"/>
</dbReference>
<dbReference type="InterPro" id="IPR036264">
    <property type="entry name" value="Bact_exopeptidase_dim_dom"/>
</dbReference>
<dbReference type="InterPro" id="IPR002933">
    <property type="entry name" value="Peptidase_M20"/>
</dbReference>
<dbReference type="InterPro" id="IPR011650">
    <property type="entry name" value="Peptidase_M20_dimer"/>
</dbReference>
<dbReference type="InterPro" id="IPR010161">
    <property type="entry name" value="Peptidase_M20B"/>
</dbReference>
<dbReference type="NCBIfam" id="TIGR01882">
    <property type="entry name" value="peptidase-T"/>
    <property type="match status" value="1"/>
</dbReference>
<dbReference type="NCBIfam" id="NF003976">
    <property type="entry name" value="PRK05469.1"/>
    <property type="match status" value="1"/>
</dbReference>
<dbReference type="NCBIfam" id="NF009920">
    <property type="entry name" value="PRK13381.1"/>
    <property type="match status" value="1"/>
</dbReference>
<dbReference type="PANTHER" id="PTHR42994">
    <property type="entry name" value="PEPTIDASE T"/>
    <property type="match status" value="1"/>
</dbReference>
<dbReference type="PANTHER" id="PTHR42994:SF1">
    <property type="entry name" value="PEPTIDASE T"/>
    <property type="match status" value="1"/>
</dbReference>
<dbReference type="Pfam" id="PF07687">
    <property type="entry name" value="M20_dimer"/>
    <property type="match status" value="1"/>
</dbReference>
<dbReference type="Pfam" id="PF01546">
    <property type="entry name" value="Peptidase_M20"/>
    <property type="match status" value="1"/>
</dbReference>
<dbReference type="PIRSF" id="PIRSF037215">
    <property type="entry name" value="Peptidase_M20B"/>
    <property type="match status" value="1"/>
</dbReference>
<dbReference type="SUPFAM" id="SSF55031">
    <property type="entry name" value="Bacterial exopeptidase dimerisation domain"/>
    <property type="match status" value="1"/>
</dbReference>
<dbReference type="SUPFAM" id="SSF53187">
    <property type="entry name" value="Zn-dependent exopeptidases"/>
    <property type="match status" value="1"/>
</dbReference>
<dbReference type="PROSITE" id="PS00758">
    <property type="entry name" value="ARGE_DAPE_CPG2_1"/>
    <property type="match status" value="1"/>
</dbReference>
<dbReference type="PROSITE" id="PS00759">
    <property type="entry name" value="ARGE_DAPE_CPG2_2"/>
    <property type="match status" value="1"/>
</dbReference>
<keyword id="KW-0031">Aminopeptidase</keyword>
<keyword id="KW-0963">Cytoplasm</keyword>
<keyword id="KW-0378">Hydrolase</keyword>
<keyword id="KW-0479">Metal-binding</keyword>
<keyword id="KW-0482">Metalloprotease</keyword>
<keyword id="KW-0645">Protease</keyword>
<keyword id="KW-0862">Zinc</keyword>
<protein>
    <recommendedName>
        <fullName evidence="1">Peptidase T</fullName>
        <ecNumber evidence="1">3.4.11.4</ecNumber>
    </recommendedName>
    <alternativeName>
        <fullName evidence="1">Aminotripeptidase</fullName>
        <shortName evidence="1">Tripeptidase</shortName>
    </alternativeName>
    <alternativeName>
        <fullName evidence="1">Tripeptide aminopeptidase</fullName>
    </alternativeName>
</protein>
<name>PEPT_BACCQ</name>
<sequence length="412" mass="46214">MNLKQELIERFTRYVKIDTQSNEDSHTVPTTPGQIEFGKLLVEELKEIGLTEVTMDDNGYVMATLPANTDKDVPVIGFLAHLDTATDFTGKNVKPQIHENFDGNAITLNEELNVVLTPEQFPELPSYKGHTIITTDGTTLLGADDKAGLTEIMVAMNYLIHNPQIKHGKIRVAFTPDEEIGRGPAHFDVEAFGASFAYTMDGGPLGGLEYESFNAAGAKLTFNGTNTHPGTAKNKMRNATKLAMEFNSYLPVEEAPEYTEGYEGFYHLLSLNGDVEQSKAYYIIRDFDRENFEARKHNVENIVKQMQEKYGRDAVVLEMNDQYYNMLEKIEPVREIVDIAYEAMKSLNIEPNIHPIRGGTDGSQLSYMGLPTPNIFTGGENYHGKFEYVSVDVMEKAVQVIIEIARRFEEQA</sequence>
<accession>B9IV41</accession>
<gene>
    <name evidence="1" type="primary">pepT</name>
    <name type="ordered locus">BCQ_3537</name>
</gene>
<comment type="function">
    <text evidence="1">Cleaves the N-terminal amino acid of tripeptides.</text>
</comment>
<comment type="catalytic activity">
    <reaction evidence="1">
        <text>Release of the N-terminal residue from a tripeptide.</text>
        <dbReference type="EC" id="3.4.11.4"/>
    </reaction>
</comment>
<comment type="cofactor">
    <cofactor evidence="1">
        <name>Zn(2+)</name>
        <dbReference type="ChEBI" id="CHEBI:29105"/>
    </cofactor>
    <text evidence="1">Binds 2 Zn(2+) ions per subunit.</text>
</comment>
<comment type="subcellular location">
    <subcellularLocation>
        <location evidence="1">Cytoplasm</location>
    </subcellularLocation>
</comment>
<comment type="similarity">
    <text evidence="1">Belongs to the peptidase M20B family.</text>
</comment>
<organism>
    <name type="scientific">Bacillus cereus (strain Q1)</name>
    <dbReference type="NCBI Taxonomy" id="361100"/>
    <lineage>
        <taxon>Bacteria</taxon>
        <taxon>Bacillati</taxon>
        <taxon>Bacillota</taxon>
        <taxon>Bacilli</taxon>
        <taxon>Bacillales</taxon>
        <taxon>Bacillaceae</taxon>
        <taxon>Bacillus</taxon>
        <taxon>Bacillus cereus group</taxon>
    </lineage>
</organism>
<reference key="1">
    <citation type="journal article" date="2009" name="J. Bacteriol.">
        <title>Complete genome sequence of the extremophilic Bacillus cereus strain Q1 with industrial applications.</title>
        <authorList>
            <person name="Xiong Z."/>
            <person name="Jiang Y."/>
            <person name="Qi D."/>
            <person name="Lu H."/>
            <person name="Yang F."/>
            <person name="Yang J."/>
            <person name="Chen L."/>
            <person name="Sun L."/>
            <person name="Xu X."/>
            <person name="Xue Y."/>
            <person name="Zhu Y."/>
            <person name="Jin Q."/>
        </authorList>
    </citation>
    <scope>NUCLEOTIDE SEQUENCE [LARGE SCALE GENOMIC DNA]</scope>
    <source>
        <strain>Q1</strain>
    </source>
</reference>